<name>Y3273_BURM7</name>
<sequence>MDIALDLQSIAVQEKTLVFPQFDAARAWALGSQLREFALARGHAVAIDVRTFGQPLFFALVDGATPDNVDWARRKGNVVAHFRRSSYAIGLRLQQAGATLADKHGLPAAEYASHGGAFPIAVAGAGVIGSVTVSGLPQRGDHELVVEALCAQLGHAYATLALTGN</sequence>
<comment type="similarity">
    <text evidence="1">Belongs to the UPF0303 family.</text>
</comment>
<comment type="sequence caution" evidence="2">
    <conflict type="erroneous initiation">
        <sequence resource="EMBL-CDS" id="ABO04074"/>
    </conflict>
    <text>Extended N-terminus.</text>
</comment>
<gene>
    <name type="ordered locus">BMA10247_0773</name>
</gene>
<proteinExistence type="inferred from homology"/>
<organism>
    <name type="scientific">Burkholderia mallei (strain NCTC 10247)</name>
    <dbReference type="NCBI Taxonomy" id="320389"/>
    <lineage>
        <taxon>Bacteria</taxon>
        <taxon>Pseudomonadati</taxon>
        <taxon>Pseudomonadota</taxon>
        <taxon>Betaproteobacteria</taxon>
        <taxon>Burkholderiales</taxon>
        <taxon>Burkholderiaceae</taxon>
        <taxon>Burkholderia</taxon>
        <taxon>pseudomallei group</taxon>
    </lineage>
</organism>
<protein>
    <recommendedName>
        <fullName evidence="1">UPF0303 protein BMA10247_0773</fullName>
    </recommendedName>
</protein>
<feature type="chain" id="PRO_1000046740" description="UPF0303 protein BMA10247_0773">
    <location>
        <begin position="1"/>
        <end position="165"/>
    </location>
</feature>
<accession>A3MJA2</accession>
<reference key="1">
    <citation type="journal article" date="2010" name="Genome Biol. Evol.">
        <title>Continuing evolution of Burkholderia mallei through genome reduction and large-scale rearrangements.</title>
        <authorList>
            <person name="Losada L."/>
            <person name="Ronning C.M."/>
            <person name="DeShazer D."/>
            <person name="Woods D."/>
            <person name="Fedorova N."/>
            <person name="Kim H.S."/>
            <person name="Shabalina S.A."/>
            <person name="Pearson T.R."/>
            <person name="Brinkac L."/>
            <person name="Tan P."/>
            <person name="Nandi T."/>
            <person name="Crabtree J."/>
            <person name="Badger J."/>
            <person name="Beckstrom-Sternberg S."/>
            <person name="Saqib M."/>
            <person name="Schutzer S.E."/>
            <person name="Keim P."/>
            <person name="Nierman W.C."/>
        </authorList>
    </citation>
    <scope>NUCLEOTIDE SEQUENCE [LARGE SCALE GENOMIC DNA]</scope>
    <source>
        <strain>NCTC 10247</strain>
    </source>
</reference>
<evidence type="ECO:0000255" key="1">
    <source>
        <dbReference type="HAMAP-Rule" id="MF_00761"/>
    </source>
</evidence>
<evidence type="ECO:0000305" key="2"/>
<dbReference type="EMBL" id="CP000548">
    <property type="protein sequence ID" value="ABO04074.2"/>
    <property type="status" value="ALT_INIT"/>
    <property type="molecule type" value="Genomic_DNA"/>
</dbReference>
<dbReference type="RefSeq" id="WP_004199466.1">
    <property type="nucleotide sequence ID" value="NZ_CP007802.1"/>
</dbReference>
<dbReference type="SMR" id="A3MJA2"/>
<dbReference type="KEGG" id="bmaz:BM44_2291"/>
<dbReference type="KEGG" id="bmn:BMA10247_0773"/>
<dbReference type="PATRIC" id="fig|320389.8.peg.2573"/>
<dbReference type="Gene3D" id="3.30.450.150">
    <property type="entry name" value="Haem-degrading domain"/>
    <property type="match status" value="1"/>
</dbReference>
<dbReference type="HAMAP" id="MF_00761">
    <property type="entry name" value="UPF0303"/>
    <property type="match status" value="1"/>
</dbReference>
<dbReference type="InterPro" id="IPR005624">
    <property type="entry name" value="PduO/GlcC-like"/>
</dbReference>
<dbReference type="InterPro" id="IPR038084">
    <property type="entry name" value="PduO/GlcC-like_sf"/>
</dbReference>
<dbReference type="InterPro" id="IPR010371">
    <property type="entry name" value="YBR137W-like"/>
</dbReference>
<dbReference type="NCBIfam" id="NF002695">
    <property type="entry name" value="PRK02487.1-4"/>
    <property type="match status" value="1"/>
</dbReference>
<dbReference type="NCBIfam" id="NF002696">
    <property type="entry name" value="PRK02487.1-5"/>
    <property type="match status" value="1"/>
</dbReference>
<dbReference type="PANTHER" id="PTHR28255">
    <property type="match status" value="1"/>
</dbReference>
<dbReference type="PANTHER" id="PTHR28255:SF1">
    <property type="entry name" value="UPF0303 PROTEIN YBR137W"/>
    <property type="match status" value="1"/>
</dbReference>
<dbReference type="Pfam" id="PF03928">
    <property type="entry name" value="HbpS-like"/>
    <property type="match status" value="1"/>
</dbReference>
<dbReference type="PIRSF" id="PIRSF008757">
    <property type="entry name" value="UCP008757"/>
    <property type="match status" value="1"/>
</dbReference>
<dbReference type="SUPFAM" id="SSF143744">
    <property type="entry name" value="GlcG-like"/>
    <property type="match status" value="1"/>
</dbReference>